<reference key="1">
    <citation type="journal article" date="1997" name="Biochim. Biophys. Acta">
        <title>Structure and expression of the mouse S10 gene.</title>
        <authorList>
            <person name="Zheng J.Y."/>
            <person name="Koda T."/>
            <person name="Arimura Y."/>
            <person name="Kishi M."/>
            <person name="Kakinuma M."/>
        </authorList>
    </citation>
    <scope>NUCLEOTIDE SEQUENCE [GENOMIC DNA / MRNA]</scope>
    <scope>TISSUE SPECIFICITY</scope>
    <source>
        <tissue>Brain</tissue>
    </source>
</reference>
<reference key="2">
    <citation type="journal article" date="2008" name="Mol. Biol. Cell">
        <title>Golgi-resident small GTPase Rab33B interacts with Atg16L and modulates autophagosome formation.</title>
        <authorList>
            <person name="Itoh T."/>
            <person name="Fujita N."/>
            <person name="Kanno E."/>
            <person name="Yamamoto A."/>
            <person name="Yoshimori T."/>
            <person name="Fukuda M."/>
        </authorList>
    </citation>
    <scope>FUNCTION</scope>
    <scope>INTERACTION WITH ATG16L1</scope>
</reference>
<sequence>MAQPILGHGSLQPASAAGLASLELDSSMDQYVQIRIFKIIVIGDSNVGKTCLTFRFCGGTFPDKTEATIGVDFREKTVEIEGEKIKVQVWDTAGQERFRKSMVEHYYRNVHAVVFVYDVTKMTSFTNLKMWIQECNGHAVPPLVPKVLVGNKCDLREQIQVPSNLALKFADAHNMLLFETSAKDPKESQNVESIFMCLACRLKAQKSLLYRDAERQQGKVQKLEFSQEANGKASCPC</sequence>
<dbReference type="EC" id="3.6.5.2" evidence="2"/>
<dbReference type="EMBL" id="D83279">
    <property type="protein sequence ID" value="BAA11883.1"/>
    <property type="molecule type" value="mRNA"/>
</dbReference>
<dbReference type="EMBL" id="D83277">
    <property type="protein sequence ID" value="BAA11882.1"/>
    <property type="molecule type" value="Genomic_DNA"/>
</dbReference>
<dbReference type="CCDS" id="CCDS30110.1"/>
<dbReference type="RefSeq" id="NP_035358.1">
    <property type="nucleotide sequence ID" value="NM_011228.3"/>
</dbReference>
<dbReference type="RefSeq" id="XP_030107122.1">
    <property type="nucleotide sequence ID" value="XM_030251262.2"/>
</dbReference>
<dbReference type="RefSeq" id="XP_036017753.1">
    <property type="nucleotide sequence ID" value="XM_036161860.1"/>
</dbReference>
<dbReference type="SMR" id="P97950"/>
<dbReference type="FunCoup" id="P97950">
    <property type="interactions" value="723"/>
</dbReference>
<dbReference type="IntAct" id="P97950">
    <property type="interactions" value="9"/>
</dbReference>
<dbReference type="STRING" id="10090.ENSMUSP00000033430"/>
<dbReference type="iPTMnet" id="P97950"/>
<dbReference type="PhosphoSitePlus" id="P97950"/>
<dbReference type="PaxDb" id="10090-ENSMUSP00000033430"/>
<dbReference type="PeptideAtlas" id="P97950"/>
<dbReference type="ProteomicsDB" id="254992"/>
<dbReference type="Antibodypedia" id="30163">
    <property type="antibodies" value="135 antibodies from 27 providers"/>
</dbReference>
<dbReference type="DNASU" id="19337"/>
<dbReference type="Ensembl" id="ENSMUST00000033430.3">
    <property type="protein sequence ID" value="ENSMUSP00000033430.3"/>
    <property type="gene ID" value="ENSMUSG00000031104.3"/>
</dbReference>
<dbReference type="GeneID" id="19337"/>
<dbReference type="KEGG" id="mmu:19337"/>
<dbReference type="UCSC" id="uc009tci.2">
    <property type="organism name" value="mouse"/>
</dbReference>
<dbReference type="AGR" id="MGI:109493"/>
<dbReference type="CTD" id="9363"/>
<dbReference type="MGI" id="MGI:109493">
    <property type="gene designation" value="Rab33a"/>
</dbReference>
<dbReference type="VEuPathDB" id="HostDB:ENSMUSG00000031104"/>
<dbReference type="eggNOG" id="KOG0084">
    <property type="taxonomic scope" value="Eukaryota"/>
</dbReference>
<dbReference type="GeneTree" id="ENSGT00940000160863"/>
<dbReference type="HOGENOM" id="CLU_041217_10_3_1"/>
<dbReference type="InParanoid" id="P97950"/>
<dbReference type="OMA" id="FPQETNS"/>
<dbReference type="OrthoDB" id="10006973at2759"/>
<dbReference type="PhylomeDB" id="P97950"/>
<dbReference type="TreeFam" id="TF300097"/>
<dbReference type="Reactome" id="R-MMU-8854214">
    <property type="pathway name" value="TBC/RABGAPs"/>
</dbReference>
<dbReference type="Reactome" id="R-MMU-8873719">
    <property type="pathway name" value="RAB geranylgeranylation"/>
</dbReference>
<dbReference type="BioGRID-ORCS" id="19337">
    <property type="hits" value="2 hits in 78 CRISPR screens"/>
</dbReference>
<dbReference type="ChiTaRS" id="Rab33a">
    <property type="organism name" value="mouse"/>
</dbReference>
<dbReference type="PRO" id="PR:P97950"/>
<dbReference type="Proteomes" id="UP000000589">
    <property type="component" value="Chromosome X"/>
</dbReference>
<dbReference type="RNAct" id="P97950">
    <property type="molecule type" value="protein"/>
</dbReference>
<dbReference type="Bgee" id="ENSMUSG00000031104">
    <property type="expression patterns" value="Expressed in superior cervical ganglion and 152 other cell types or tissues"/>
</dbReference>
<dbReference type="ExpressionAtlas" id="P97950">
    <property type="expression patterns" value="baseline and differential"/>
</dbReference>
<dbReference type="GO" id="GO:0005886">
    <property type="term" value="C:plasma membrane"/>
    <property type="evidence" value="ECO:0007669"/>
    <property type="project" value="UniProtKB-SubCell"/>
</dbReference>
<dbReference type="GO" id="GO:0005525">
    <property type="term" value="F:GTP binding"/>
    <property type="evidence" value="ECO:0007669"/>
    <property type="project" value="UniProtKB-KW"/>
</dbReference>
<dbReference type="GO" id="GO:0003924">
    <property type="term" value="F:GTPase activity"/>
    <property type="evidence" value="ECO:0007669"/>
    <property type="project" value="InterPro"/>
</dbReference>
<dbReference type="GO" id="GO:0019882">
    <property type="term" value="P:antigen processing and presentation"/>
    <property type="evidence" value="ECO:0007669"/>
    <property type="project" value="Ensembl"/>
</dbReference>
<dbReference type="GO" id="GO:0032482">
    <property type="term" value="P:Rab protein signal transduction"/>
    <property type="evidence" value="ECO:0007669"/>
    <property type="project" value="InterPro"/>
</dbReference>
<dbReference type="CDD" id="cd04115">
    <property type="entry name" value="Rab33B_Rab33A"/>
    <property type="match status" value="1"/>
</dbReference>
<dbReference type="FunFam" id="3.40.50.300:FF:000516">
    <property type="entry name" value="RAB33B, member RAS oncogene family"/>
    <property type="match status" value="1"/>
</dbReference>
<dbReference type="Gene3D" id="3.40.50.300">
    <property type="entry name" value="P-loop containing nucleotide triphosphate hydrolases"/>
    <property type="match status" value="1"/>
</dbReference>
<dbReference type="InterPro" id="IPR027417">
    <property type="entry name" value="P-loop_NTPase"/>
</dbReference>
<dbReference type="InterPro" id="IPR041822">
    <property type="entry name" value="Rab33A/B"/>
</dbReference>
<dbReference type="InterPro" id="IPR005225">
    <property type="entry name" value="Small_GTP-bd"/>
</dbReference>
<dbReference type="InterPro" id="IPR001806">
    <property type="entry name" value="Small_GTPase"/>
</dbReference>
<dbReference type="NCBIfam" id="TIGR00231">
    <property type="entry name" value="small_GTP"/>
    <property type="match status" value="1"/>
</dbReference>
<dbReference type="PANTHER" id="PTHR47978">
    <property type="match status" value="1"/>
</dbReference>
<dbReference type="Pfam" id="PF00071">
    <property type="entry name" value="Ras"/>
    <property type="match status" value="1"/>
</dbReference>
<dbReference type="PRINTS" id="PR00449">
    <property type="entry name" value="RASTRNSFRMNG"/>
</dbReference>
<dbReference type="SMART" id="SM00175">
    <property type="entry name" value="RAB"/>
    <property type="match status" value="1"/>
</dbReference>
<dbReference type="SMART" id="SM00176">
    <property type="entry name" value="RAN"/>
    <property type="match status" value="1"/>
</dbReference>
<dbReference type="SMART" id="SM00173">
    <property type="entry name" value="RAS"/>
    <property type="match status" value="1"/>
</dbReference>
<dbReference type="SMART" id="SM00174">
    <property type="entry name" value="RHO"/>
    <property type="match status" value="1"/>
</dbReference>
<dbReference type="SUPFAM" id="SSF52540">
    <property type="entry name" value="P-loop containing nucleoside triphosphate hydrolases"/>
    <property type="match status" value="1"/>
</dbReference>
<dbReference type="PROSITE" id="PS51419">
    <property type="entry name" value="RAB"/>
    <property type="match status" value="1"/>
</dbReference>
<accession>P97950</accession>
<feature type="chain" id="PRO_0000121238" description="Ras-related protein Rab-33A">
    <location>
        <begin position="1"/>
        <end position="237"/>
    </location>
</feature>
<feature type="short sequence motif" description="Switch 1" evidence="2">
    <location>
        <begin position="59"/>
        <end position="71"/>
    </location>
</feature>
<feature type="short sequence motif" description="Switch 2" evidence="2">
    <location>
        <begin position="92"/>
        <end position="111"/>
    </location>
</feature>
<feature type="binding site" evidence="2">
    <location>
        <position position="46"/>
    </location>
    <ligand>
        <name>GTP</name>
        <dbReference type="ChEBI" id="CHEBI:37565"/>
    </ligand>
</feature>
<feature type="binding site" evidence="2">
    <location>
        <position position="47"/>
    </location>
    <ligand>
        <name>GTP</name>
        <dbReference type="ChEBI" id="CHEBI:37565"/>
    </ligand>
</feature>
<feature type="binding site" evidence="2">
    <location>
        <position position="48"/>
    </location>
    <ligand>
        <name>GTP</name>
        <dbReference type="ChEBI" id="CHEBI:37565"/>
    </ligand>
</feature>
<feature type="binding site" evidence="2">
    <location>
        <position position="49"/>
    </location>
    <ligand>
        <name>GTP</name>
        <dbReference type="ChEBI" id="CHEBI:37565"/>
    </ligand>
</feature>
<feature type="binding site" evidence="2">
    <location>
        <position position="50"/>
    </location>
    <ligand>
        <name>GTP</name>
        <dbReference type="ChEBI" id="CHEBI:37565"/>
    </ligand>
</feature>
<feature type="binding site" evidence="2">
    <location>
        <position position="50"/>
    </location>
    <ligand>
        <name>Mg(2+)</name>
        <dbReference type="ChEBI" id="CHEBI:18420"/>
    </ligand>
</feature>
<feature type="binding site" evidence="2">
    <location>
        <position position="51"/>
    </location>
    <ligand>
        <name>GTP</name>
        <dbReference type="ChEBI" id="CHEBI:37565"/>
    </ligand>
</feature>
<feature type="binding site" evidence="2">
    <location>
        <position position="65"/>
    </location>
    <ligand>
        <name>GTP</name>
        <dbReference type="ChEBI" id="CHEBI:37565"/>
    </ligand>
</feature>
<feature type="binding site" evidence="2">
    <location>
        <position position="68"/>
    </location>
    <ligand>
        <name>GTP</name>
        <dbReference type="ChEBI" id="CHEBI:37565"/>
    </ligand>
</feature>
<feature type="binding site" evidence="2">
    <location>
        <position position="68"/>
    </location>
    <ligand>
        <name>Mg(2+)</name>
        <dbReference type="ChEBI" id="CHEBI:18420"/>
    </ligand>
</feature>
<feature type="binding site" evidence="2">
    <location>
        <position position="91"/>
    </location>
    <ligand>
        <name>Mg(2+)</name>
        <dbReference type="ChEBI" id="CHEBI:18420"/>
    </ligand>
</feature>
<feature type="binding site" evidence="2">
    <location>
        <position position="94"/>
    </location>
    <ligand>
        <name>GTP</name>
        <dbReference type="ChEBI" id="CHEBI:37565"/>
    </ligand>
</feature>
<feature type="binding site" evidence="2">
    <location>
        <position position="151"/>
    </location>
    <ligand>
        <name>GTP</name>
        <dbReference type="ChEBI" id="CHEBI:37565"/>
    </ligand>
</feature>
<feature type="binding site" evidence="2">
    <location>
        <position position="152"/>
    </location>
    <ligand>
        <name>GTP</name>
        <dbReference type="ChEBI" id="CHEBI:37565"/>
    </ligand>
</feature>
<feature type="binding site" evidence="2">
    <location>
        <position position="154"/>
    </location>
    <ligand>
        <name>GTP</name>
        <dbReference type="ChEBI" id="CHEBI:37565"/>
    </ligand>
</feature>
<feature type="binding site" evidence="2">
    <location>
        <position position="182"/>
    </location>
    <ligand>
        <name>GTP</name>
        <dbReference type="ChEBI" id="CHEBI:37565"/>
    </ligand>
</feature>
<feature type="binding site" evidence="2">
    <location>
        <position position="183"/>
    </location>
    <ligand>
        <name>GTP</name>
        <dbReference type="ChEBI" id="CHEBI:37565"/>
    </ligand>
</feature>
<feature type="modified residue" description="Cysteine methyl ester" evidence="1">
    <location>
        <position position="237"/>
    </location>
</feature>
<feature type="lipid moiety-binding region" description="S-geranylgeranyl cysteine" evidence="1">
    <location>
        <position position="235"/>
    </location>
</feature>
<feature type="lipid moiety-binding region" description="S-geranylgeranyl cysteine" evidence="1">
    <location>
        <position position="237"/>
    </location>
</feature>
<organism>
    <name type="scientific">Mus musculus</name>
    <name type="common">Mouse</name>
    <dbReference type="NCBI Taxonomy" id="10090"/>
    <lineage>
        <taxon>Eukaryota</taxon>
        <taxon>Metazoa</taxon>
        <taxon>Chordata</taxon>
        <taxon>Craniata</taxon>
        <taxon>Vertebrata</taxon>
        <taxon>Euteleostomi</taxon>
        <taxon>Mammalia</taxon>
        <taxon>Eutheria</taxon>
        <taxon>Euarchontoglires</taxon>
        <taxon>Glires</taxon>
        <taxon>Rodentia</taxon>
        <taxon>Myomorpha</taxon>
        <taxon>Muroidea</taxon>
        <taxon>Muridae</taxon>
        <taxon>Murinae</taxon>
        <taxon>Mus</taxon>
        <taxon>Mus</taxon>
    </lineage>
</organism>
<proteinExistence type="evidence at protein level"/>
<name>RB33A_MOUSE</name>
<keyword id="KW-1003">Cell membrane</keyword>
<keyword id="KW-0342">GTP-binding</keyword>
<keyword id="KW-0378">Hydrolase</keyword>
<keyword id="KW-0449">Lipoprotein</keyword>
<keyword id="KW-0460">Magnesium</keyword>
<keyword id="KW-0472">Membrane</keyword>
<keyword id="KW-0479">Metal-binding</keyword>
<keyword id="KW-0488">Methylation</keyword>
<keyword id="KW-0547">Nucleotide-binding</keyword>
<keyword id="KW-0636">Prenylation</keyword>
<keyword id="KW-1185">Reference proteome</keyword>
<evidence type="ECO:0000250" key="1"/>
<evidence type="ECO:0000250" key="2">
    <source>
        <dbReference type="UniProtKB" id="Q9H082"/>
    </source>
</evidence>
<evidence type="ECO:0000269" key="3">
    <source>
    </source>
</evidence>
<evidence type="ECO:0000269" key="4">
    <source>
    </source>
</evidence>
<evidence type="ECO:0000303" key="5">
    <source>
    </source>
</evidence>
<evidence type="ECO:0000305" key="6"/>
<evidence type="ECO:0000312" key="7">
    <source>
        <dbReference type="MGI" id="MGI:109493"/>
    </source>
</evidence>
<gene>
    <name evidence="7" type="primary">Rab33a</name>
    <name type="synonym">Rabs10</name>
</gene>
<protein>
    <recommendedName>
        <fullName>Ras-related protein Rab-33A</fullName>
        <ecNumber evidence="2">3.6.5.2</ecNumber>
    </recommendedName>
    <alternativeName>
        <fullName evidence="5">Small GTP-binding protein S10</fullName>
    </alternativeName>
</protein>
<comment type="function">
    <text evidence="2 3">The small GTPases Rab are key regulators of intracellular membrane trafficking, from the formation of transport vesicles to their fusion with membranes (By similarity). Rabs cycle between an inactive GDP-bound form and an active GTP-bound form that is able to recruit to membranes different sets of downstream effectors directly responsible for vesicle formation, movement, tethering and fusion (By similarity). Modulates autophagosome formation through interaction with ATG16L1 (PubMed:18448665).</text>
</comment>
<comment type="catalytic activity">
    <reaction evidence="2">
        <text>GTP + H2O = GDP + phosphate + H(+)</text>
        <dbReference type="Rhea" id="RHEA:19669"/>
        <dbReference type="ChEBI" id="CHEBI:15377"/>
        <dbReference type="ChEBI" id="CHEBI:15378"/>
        <dbReference type="ChEBI" id="CHEBI:37565"/>
        <dbReference type="ChEBI" id="CHEBI:43474"/>
        <dbReference type="ChEBI" id="CHEBI:58189"/>
        <dbReference type="EC" id="3.6.5.2"/>
    </reaction>
    <physiologicalReaction direction="left-to-right" evidence="2">
        <dbReference type="Rhea" id="RHEA:19670"/>
    </physiologicalReaction>
</comment>
<comment type="cofactor">
    <cofactor evidence="2">
        <name>Mg(2+)</name>
        <dbReference type="ChEBI" id="CHEBI:18420"/>
    </cofactor>
</comment>
<comment type="activity regulation">
    <text evidence="6">Regulated by guanine nucleotide exchange factors (GEFs) which promote the exchange of bound GDP for free GTP (Probable). Regulated by GTPase activating proteins (GAPs) which increase the GTP hydrolysis activity (Probable). Inhibited by GDP dissociation inhibitors (GDIs) (Probable).</text>
</comment>
<comment type="subunit">
    <text evidence="3">Interacts with ATG16L1; the interaction is important for autophagosome formation.</text>
</comment>
<comment type="subcellular location">
    <subcellularLocation>
        <location evidence="6">Cell membrane</location>
        <topology evidence="6">Lipid-anchor</topology>
        <orientation evidence="6">Cytoplasmic side</orientation>
    </subcellularLocation>
</comment>
<comment type="tissue specificity">
    <text evidence="4">Expressed predominantly in brain. Weak expression in ovary.</text>
</comment>
<comment type="domain">
    <text evidence="2">Switch 1, switch 2 and the interswitch regions are characteristic of Rab GTPases and mediate the interactions with Rab downstream effectors. The switch regions undergo conformational changes upon nucleotide binding which drive interaction with specific sets of effector proteins, with most effectors only binding to GTP-bound Rab.</text>
</comment>
<comment type="similarity">
    <text evidence="6">Belongs to the small GTPase superfamily. Rab family.</text>
</comment>